<name>PHOL_ECOLI</name>
<keyword id="KW-0067">ATP-binding</keyword>
<keyword id="KW-0963">Cytoplasm</keyword>
<keyword id="KW-0547">Nucleotide-binding</keyword>
<keyword id="KW-1185">Reference proteome</keyword>
<reference key="1">
    <citation type="journal article" date="1996" name="DNA Res.">
        <title>A 718-kb DNA sequence of the Escherichia coli K-12 genome corresponding to the 12.7-28.0 min region on the linkage map.</title>
        <authorList>
            <person name="Oshima T."/>
            <person name="Aiba H."/>
            <person name="Baba T."/>
            <person name="Fujita K."/>
            <person name="Hayashi K."/>
            <person name="Honjo A."/>
            <person name="Ikemoto K."/>
            <person name="Inada T."/>
            <person name="Itoh T."/>
            <person name="Kajihara M."/>
            <person name="Kanai K."/>
            <person name="Kashimoto K."/>
            <person name="Kimura S."/>
            <person name="Kitagawa M."/>
            <person name="Makino K."/>
            <person name="Masuda S."/>
            <person name="Miki T."/>
            <person name="Mizobuchi K."/>
            <person name="Mori H."/>
            <person name="Motomura K."/>
            <person name="Nakamura Y."/>
            <person name="Nashimoto H."/>
            <person name="Nishio Y."/>
            <person name="Saito N."/>
            <person name="Sampei G."/>
            <person name="Seki Y."/>
            <person name="Tagami H."/>
            <person name="Takemoto K."/>
            <person name="Wada C."/>
            <person name="Yamamoto Y."/>
            <person name="Yano M."/>
            <person name="Horiuchi T."/>
        </authorList>
    </citation>
    <scope>NUCLEOTIDE SEQUENCE [LARGE SCALE GENOMIC DNA]</scope>
    <source>
        <strain>K12 / W3110 / ATCC 27325 / DSM 5911</strain>
    </source>
</reference>
<reference key="2">
    <citation type="submission" date="1997-01" db="EMBL/GenBank/DDBJ databases">
        <title>Sequence of minutes 4-25 of Escherichia coli.</title>
        <authorList>
            <person name="Chung E."/>
            <person name="Allen E."/>
            <person name="Araujo R."/>
            <person name="Aparicio A.M."/>
            <person name="Davis K."/>
            <person name="Duncan M."/>
            <person name="Federspiel N."/>
            <person name="Hyman R."/>
            <person name="Kalman S."/>
            <person name="Komp C."/>
            <person name="Kurdi O."/>
            <person name="Lew H."/>
            <person name="Lin D."/>
            <person name="Namath A."/>
            <person name="Oefner P."/>
            <person name="Roberts D."/>
            <person name="Schramm S."/>
            <person name="Davis R.W."/>
        </authorList>
    </citation>
    <scope>NUCLEOTIDE SEQUENCE [LARGE SCALE GENOMIC DNA]</scope>
    <source>
        <strain>K12 / MG1655 / ATCC 47076</strain>
    </source>
</reference>
<reference key="3">
    <citation type="journal article" date="1997" name="Science">
        <title>The complete genome sequence of Escherichia coli K-12.</title>
        <authorList>
            <person name="Blattner F.R."/>
            <person name="Plunkett G. III"/>
            <person name="Bloch C.A."/>
            <person name="Perna N.T."/>
            <person name="Burland V."/>
            <person name="Riley M."/>
            <person name="Collado-Vides J."/>
            <person name="Glasner J.D."/>
            <person name="Rode C.K."/>
            <person name="Mayhew G.F."/>
            <person name="Gregor J."/>
            <person name="Davis N.W."/>
            <person name="Kirkpatrick H.A."/>
            <person name="Goeden M.A."/>
            <person name="Rose D.J."/>
            <person name="Mau B."/>
            <person name="Shao Y."/>
        </authorList>
    </citation>
    <scope>NUCLEOTIDE SEQUENCE [LARGE SCALE GENOMIC DNA]</scope>
    <source>
        <strain>K12 / MG1655 / ATCC 47076</strain>
    </source>
</reference>
<reference key="4">
    <citation type="journal article" date="2006" name="Mol. Syst. Biol.">
        <title>Highly accurate genome sequences of Escherichia coli K-12 strains MG1655 and W3110.</title>
        <authorList>
            <person name="Hayashi K."/>
            <person name="Morooka N."/>
            <person name="Yamamoto Y."/>
            <person name="Fujita K."/>
            <person name="Isono K."/>
            <person name="Choi S."/>
            <person name="Ohtsubo E."/>
            <person name="Baba T."/>
            <person name="Wanner B.L."/>
            <person name="Mori H."/>
            <person name="Horiuchi T."/>
        </authorList>
    </citation>
    <scope>NUCLEOTIDE SEQUENCE [LARGE SCALE GENOMIC DNA]</scope>
    <source>
        <strain>K12 / W3110 / ATCC 27325 / DSM 5911</strain>
    </source>
</reference>
<accession>P0A9K3</accession>
<accession>P77349</accession>
<dbReference type="EMBL" id="U82598">
    <property type="protein sequence ID" value="AAB40862.1"/>
    <property type="status" value="ALT_INIT"/>
    <property type="molecule type" value="Genomic_DNA"/>
</dbReference>
<dbReference type="EMBL" id="U00096">
    <property type="protein sequence ID" value="AAC73761.2"/>
    <property type="molecule type" value="Genomic_DNA"/>
</dbReference>
<dbReference type="EMBL" id="AP009048">
    <property type="protein sequence ID" value="BAA35315.1"/>
    <property type="status" value="ALT_INIT"/>
    <property type="molecule type" value="Genomic_DNA"/>
</dbReference>
<dbReference type="PIR" id="B64801">
    <property type="entry name" value="B64801"/>
</dbReference>
<dbReference type="RefSeq" id="NP_415193.2">
    <property type="nucleotide sequence ID" value="NC_000913.3"/>
</dbReference>
<dbReference type="RefSeq" id="WP_001018040.1">
    <property type="nucleotide sequence ID" value="NZ_STEB01000031.1"/>
</dbReference>
<dbReference type="SMR" id="P0A9K3"/>
<dbReference type="BioGRID" id="4263347">
    <property type="interactions" value="34"/>
</dbReference>
<dbReference type="DIP" id="DIP-47879N"/>
<dbReference type="FunCoup" id="P0A9K3">
    <property type="interactions" value="595"/>
</dbReference>
<dbReference type="IntAct" id="P0A9K3">
    <property type="interactions" value="55"/>
</dbReference>
<dbReference type="STRING" id="511145.b0660"/>
<dbReference type="jPOST" id="P0A9K3"/>
<dbReference type="PaxDb" id="511145-b0660"/>
<dbReference type="EnsemblBacteria" id="AAC73761">
    <property type="protein sequence ID" value="AAC73761"/>
    <property type="gene ID" value="b0660"/>
</dbReference>
<dbReference type="GeneID" id="948044"/>
<dbReference type="KEGG" id="ecj:JW0657"/>
<dbReference type="KEGG" id="eco:b0660"/>
<dbReference type="KEGG" id="ecoc:C3026_03300"/>
<dbReference type="PATRIC" id="fig|511145.12.peg.694"/>
<dbReference type="EchoBASE" id="EB3420"/>
<dbReference type="eggNOG" id="COG1702">
    <property type="taxonomic scope" value="Bacteria"/>
</dbReference>
<dbReference type="HOGENOM" id="CLU_051654_0_0_6"/>
<dbReference type="InParanoid" id="P0A9K3"/>
<dbReference type="OMA" id="NLCGQFD"/>
<dbReference type="PhylomeDB" id="P0A9K3"/>
<dbReference type="BioCyc" id="EcoCyc:G6363-MONOMER"/>
<dbReference type="PRO" id="PR:P0A9K3"/>
<dbReference type="Proteomes" id="UP000000625">
    <property type="component" value="Chromosome"/>
</dbReference>
<dbReference type="GO" id="GO:0005829">
    <property type="term" value="C:cytosol"/>
    <property type="evidence" value="ECO:0000314"/>
    <property type="project" value="EcoCyc"/>
</dbReference>
<dbReference type="GO" id="GO:0005524">
    <property type="term" value="F:ATP binding"/>
    <property type="evidence" value="ECO:0000318"/>
    <property type="project" value="GO_Central"/>
</dbReference>
<dbReference type="FunFam" id="3.40.50.300:FF:000013">
    <property type="entry name" value="PhoH family ATPase"/>
    <property type="match status" value="1"/>
</dbReference>
<dbReference type="Gene3D" id="3.40.50.300">
    <property type="entry name" value="P-loop containing nucleotide triphosphate hydrolases"/>
    <property type="match status" value="1"/>
</dbReference>
<dbReference type="InterPro" id="IPR027417">
    <property type="entry name" value="P-loop_NTPase"/>
</dbReference>
<dbReference type="InterPro" id="IPR003714">
    <property type="entry name" value="PhoH"/>
</dbReference>
<dbReference type="InterPro" id="IPR051451">
    <property type="entry name" value="PhoH2-like"/>
</dbReference>
<dbReference type="PANTHER" id="PTHR30473:SF1">
    <property type="entry name" value="PHOH-LIKE PROTEIN"/>
    <property type="match status" value="1"/>
</dbReference>
<dbReference type="PANTHER" id="PTHR30473">
    <property type="entry name" value="PROTEIN PHOH"/>
    <property type="match status" value="1"/>
</dbReference>
<dbReference type="Pfam" id="PF02562">
    <property type="entry name" value="PhoH"/>
    <property type="match status" value="1"/>
</dbReference>
<dbReference type="SUPFAM" id="SSF52540">
    <property type="entry name" value="P-loop containing nucleoside triphosphate hydrolases"/>
    <property type="match status" value="1"/>
</dbReference>
<proteinExistence type="evidence at protein level"/>
<organism>
    <name type="scientific">Escherichia coli (strain K12)</name>
    <dbReference type="NCBI Taxonomy" id="83333"/>
    <lineage>
        <taxon>Bacteria</taxon>
        <taxon>Pseudomonadati</taxon>
        <taxon>Pseudomonadota</taxon>
        <taxon>Gammaproteobacteria</taxon>
        <taxon>Enterobacterales</taxon>
        <taxon>Enterobacteriaceae</taxon>
        <taxon>Escherichia</taxon>
    </lineage>
</organism>
<protein>
    <recommendedName>
        <fullName>PhoH-like protein</fullName>
    </recommendedName>
</protein>
<evidence type="ECO:0000255" key="1"/>
<evidence type="ECO:0000305" key="2"/>
<comment type="interaction">
    <interactant intactId="EBI-560255">
        <id>P0A9K3</id>
    </interactant>
    <interactant intactId="EBI-560240">
        <id>P0A898</id>
        <label>ybeY</label>
    </interactant>
    <organismsDiffer>false</organismsDiffer>
    <experiments>2</experiments>
</comment>
<comment type="subcellular location">
    <subcellularLocation>
        <location evidence="2">Cytoplasm</location>
    </subcellularLocation>
</comment>
<comment type="similarity">
    <text evidence="2">Belongs to the PhoH family.</text>
</comment>
<comment type="sequence caution" evidence="2">
    <conflict type="erroneous initiation">
        <sequence resource="EMBL-CDS" id="AAB40862"/>
    </conflict>
</comment>
<comment type="sequence caution" evidence="2">
    <conflict type="erroneous initiation">
        <sequence resource="EMBL-CDS" id="BAA35315"/>
    </conflict>
</comment>
<feature type="chain" id="PRO_0000201152" description="PhoH-like protein">
    <location>
        <begin position="1"/>
        <end position="346"/>
    </location>
</feature>
<feature type="binding site" evidence="1">
    <location>
        <begin position="142"/>
        <end position="149"/>
    </location>
    <ligand>
        <name>ATP</name>
        <dbReference type="ChEBI" id="CHEBI:30616"/>
    </ligand>
</feature>
<gene>
    <name type="primary">ybeZ</name>
    <name type="ordered locus">b0660</name>
    <name type="ordered locus">JW0657</name>
</gene>
<sequence length="346" mass="39039">MNIDTREITLEPADNARLLSLCGPFDDNIKQLERRLGIEINRRDNHFKLTGRPICVTAAADILRSLYVDTAPMRGQIQDIEPEQIHLAIKEARVLEQSAESVPEYGKAVNIKTKRGVIKPRTPNQAQYIANILDHDITFGVGPAGTGKTYLAVAAAVDALERQEIRRILLTRPAVEAGEKLGFLPGDLSQKVDPYLRPLYDALFEMLGFEKVEKLIERNVIEVAPLAYMRGRTLNDAFIILDESQNTTIEQMKMFLTRIGFNSKAVITGDVTQIDLPRNTKSGLRHAIEVLADVEEISFNFFHSEDVVRHPVVARIVNAYEAWEEAEQKRKAALAAERKREEQEQK</sequence>